<dbReference type="EMBL" id="BC120442">
    <property type="protein sequence ID" value="AAI20443.1"/>
    <property type="molecule type" value="mRNA"/>
</dbReference>
<dbReference type="RefSeq" id="NP_001071570.1">
    <property type="nucleotide sequence ID" value="NM_001078102.1"/>
</dbReference>
<dbReference type="RefSeq" id="XP_024831325.1">
    <property type="nucleotide sequence ID" value="XM_024975557.2"/>
</dbReference>
<dbReference type="SMR" id="Q0VBY7"/>
<dbReference type="FunCoup" id="Q0VBY7">
    <property type="interactions" value="2545"/>
</dbReference>
<dbReference type="STRING" id="9913.ENSBTAP00000069974"/>
<dbReference type="PaxDb" id="9913-ENSBTAP00000000600"/>
<dbReference type="GeneID" id="768227"/>
<dbReference type="KEGG" id="bta:768227"/>
<dbReference type="CTD" id="120526"/>
<dbReference type="eggNOG" id="KOG0715">
    <property type="taxonomic scope" value="Eukaryota"/>
</dbReference>
<dbReference type="HOGENOM" id="CLU_017633_7_3_1"/>
<dbReference type="InParanoid" id="Q0VBY7"/>
<dbReference type="OrthoDB" id="66964at2759"/>
<dbReference type="TreeFam" id="TF326955"/>
<dbReference type="UniPathway" id="UPA00559"/>
<dbReference type="Proteomes" id="UP000009136">
    <property type="component" value="Unplaced"/>
</dbReference>
<dbReference type="GO" id="GO:0005737">
    <property type="term" value="C:cytoplasm"/>
    <property type="evidence" value="ECO:0007669"/>
    <property type="project" value="UniProtKB-KW"/>
</dbReference>
<dbReference type="GO" id="GO:0005856">
    <property type="term" value="C:cytoskeleton"/>
    <property type="evidence" value="ECO:0007669"/>
    <property type="project" value="UniProtKB-SubCell"/>
</dbReference>
<dbReference type="GO" id="GO:0001671">
    <property type="term" value="F:ATPase activator activity"/>
    <property type="evidence" value="ECO:0000250"/>
    <property type="project" value="UniProtKB"/>
</dbReference>
<dbReference type="GO" id="GO:0008198">
    <property type="term" value="F:ferrous iron binding"/>
    <property type="evidence" value="ECO:0000250"/>
    <property type="project" value="UniProtKB"/>
</dbReference>
<dbReference type="GO" id="GO:0008270">
    <property type="term" value="F:zinc ion binding"/>
    <property type="evidence" value="ECO:0000250"/>
    <property type="project" value="UniProtKB"/>
</dbReference>
<dbReference type="GO" id="GO:0032781">
    <property type="term" value="P:positive regulation of ATP-dependent activity"/>
    <property type="evidence" value="ECO:0000250"/>
    <property type="project" value="UniProtKB"/>
</dbReference>
<dbReference type="GO" id="GO:0017183">
    <property type="term" value="P:protein histidyl modification to diphthamide"/>
    <property type="evidence" value="ECO:0007669"/>
    <property type="project" value="UniProtKB-UniPathway"/>
</dbReference>
<dbReference type="CDD" id="cd06257">
    <property type="entry name" value="DnaJ"/>
    <property type="match status" value="1"/>
</dbReference>
<dbReference type="FunFam" id="1.10.287.110:FF:000056">
    <property type="entry name" value="DnaJ (Hsp40) homolog, subfamily C, member 24"/>
    <property type="match status" value="1"/>
</dbReference>
<dbReference type="FunFam" id="3.10.660.10:FF:000002">
    <property type="entry name" value="DnaJ (Hsp40) homolog, subfamily C, member 24"/>
    <property type="match status" value="1"/>
</dbReference>
<dbReference type="Gene3D" id="1.10.287.110">
    <property type="entry name" value="DnaJ domain"/>
    <property type="match status" value="1"/>
</dbReference>
<dbReference type="Gene3D" id="3.10.660.10">
    <property type="entry name" value="DPH Zinc finger"/>
    <property type="match status" value="1"/>
</dbReference>
<dbReference type="InterPro" id="IPR001623">
    <property type="entry name" value="DnaJ_domain"/>
</dbReference>
<dbReference type="InterPro" id="IPR007872">
    <property type="entry name" value="DPH_MB_dom"/>
</dbReference>
<dbReference type="InterPro" id="IPR036671">
    <property type="entry name" value="DPH_MB_sf"/>
</dbReference>
<dbReference type="InterPro" id="IPR036869">
    <property type="entry name" value="J_dom_sf"/>
</dbReference>
<dbReference type="PANTHER" id="PTHR45255">
    <property type="entry name" value="DNAJ HOMOLOG SUBFAMILY C MEMBER 24"/>
    <property type="match status" value="1"/>
</dbReference>
<dbReference type="PANTHER" id="PTHR45255:SF1">
    <property type="entry name" value="DNAJ HOMOLOG SUBFAMILY C MEMBER 24"/>
    <property type="match status" value="1"/>
</dbReference>
<dbReference type="Pfam" id="PF00226">
    <property type="entry name" value="DnaJ"/>
    <property type="match status" value="1"/>
</dbReference>
<dbReference type="Pfam" id="PF05207">
    <property type="entry name" value="Zn_ribbon_CSL"/>
    <property type="match status" value="1"/>
</dbReference>
<dbReference type="PRINTS" id="PR00625">
    <property type="entry name" value="JDOMAIN"/>
</dbReference>
<dbReference type="SMART" id="SM00271">
    <property type="entry name" value="DnaJ"/>
    <property type="match status" value="1"/>
</dbReference>
<dbReference type="SUPFAM" id="SSF46565">
    <property type="entry name" value="Chaperone J-domain"/>
    <property type="match status" value="1"/>
</dbReference>
<dbReference type="SUPFAM" id="SSF144217">
    <property type="entry name" value="CSL zinc finger"/>
    <property type="match status" value="1"/>
</dbReference>
<dbReference type="PROSITE" id="PS50076">
    <property type="entry name" value="DNAJ_2"/>
    <property type="match status" value="1"/>
</dbReference>
<dbReference type="PROSITE" id="PS51074">
    <property type="entry name" value="DPH_MB"/>
    <property type="match status" value="1"/>
</dbReference>
<name>DJC24_BOVIN</name>
<keyword id="KW-0963">Cytoplasm</keyword>
<keyword id="KW-0206">Cytoskeleton</keyword>
<keyword id="KW-0249">Electron transport</keyword>
<keyword id="KW-0408">Iron</keyword>
<keyword id="KW-0479">Metal-binding</keyword>
<keyword id="KW-1185">Reference proteome</keyword>
<keyword id="KW-0813">Transport</keyword>
<keyword id="KW-0862">Zinc</keyword>
<reference key="1">
    <citation type="submission" date="2006-08" db="EMBL/GenBank/DDBJ databases">
        <authorList>
            <consortium name="NIH - Mammalian Gene Collection (MGC) project"/>
        </authorList>
    </citation>
    <scope>NUCLEOTIDE SEQUENCE [LARGE SCALE MRNA]</scope>
    <source>
        <strain>Hereford</strain>
        <tissue>Basal ganglia</tissue>
    </source>
</reference>
<gene>
    <name type="primary">DNAJC24</name>
    <name type="synonym">DPH4</name>
    <name type="synonym">ZCSL3</name>
</gene>
<comment type="function">
    <text evidence="1">Stimulates the ATPase activity of several Hsp70-type chaperones. This ability is enhanced by iron-binding. The iron-bound form is redox-active and can function as electron carrier. Plays a role in the diphthamide biosynthesis, a post-translational modification of histidine which occurs in translation elongation factor 2 (EEF2) (By similarity).</text>
</comment>
<comment type="pathway">
    <text>Protein modification; peptidyl-diphthamide biosynthesis.</text>
</comment>
<comment type="subunit">
    <text evidence="1">Monomer and homooligomer. Iron binding promotes oligomerization (By similarity).</text>
</comment>
<comment type="subcellular location">
    <subcellularLocation>
        <location evidence="1">Cytoplasm</location>
        <location evidence="1">Cytoskeleton</location>
    </subcellularLocation>
</comment>
<comment type="domain">
    <text evidence="3">The DPH-type metal-binding (MB) domain can bind either zinc or iron ions.</text>
</comment>
<comment type="similarity">
    <text evidence="4">Belongs to the DPH4 family.</text>
</comment>
<comment type="caution">
    <text evidence="4">It is uncertain whether Met-1 or Met-2 is the initiator.</text>
</comment>
<protein>
    <recommendedName>
        <fullName>DnaJ homolog subfamily C member 24</fullName>
    </recommendedName>
    <alternativeName>
        <fullName>CSL-type zinc finger-containing protein 3</fullName>
    </alternativeName>
    <alternativeName>
        <fullName>Diphthamide biosynthesis protein 4</fullName>
    </alternativeName>
</protein>
<feature type="chain" id="PRO_0000376799" description="DnaJ homolog subfamily C member 24">
    <location>
        <begin position="1"/>
        <end position="149"/>
    </location>
</feature>
<feature type="domain" description="J" evidence="2">
    <location>
        <begin position="11"/>
        <end position="82"/>
    </location>
</feature>
<feature type="domain" description="DPH-type MB" evidence="3">
    <location>
        <begin position="93"/>
        <end position="148"/>
    </location>
</feature>
<feature type="binding site" evidence="3">
    <location>
        <position position="115"/>
    </location>
    <ligand>
        <name>Zn(2+)</name>
        <dbReference type="ChEBI" id="CHEBI:29105"/>
    </ligand>
</feature>
<feature type="binding site" evidence="3">
    <location>
        <position position="117"/>
    </location>
    <ligand>
        <name>Zn(2+)</name>
        <dbReference type="ChEBI" id="CHEBI:29105"/>
    </ligand>
</feature>
<feature type="binding site" evidence="3">
    <location>
        <position position="136"/>
    </location>
    <ligand>
        <name>Zn(2+)</name>
        <dbReference type="ChEBI" id="CHEBI:29105"/>
    </ligand>
</feature>
<feature type="binding site" evidence="3">
    <location>
        <position position="139"/>
    </location>
    <ligand>
        <name>Zn(2+)</name>
        <dbReference type="ChEBI" id="CHEBI:29105"/>
    </ligand>
</feature>
<proteinExistence type="evidence at transcript level"/>
<organism>
    <name type="scientific">Bos taurus</name>
    <name type="common">Bovine</name>
    <dbReference type="NCBI Taxonomy" id="9913"/>
    <lineage>
        <taxon>Eukaryota</taxon>
        <taxon>Metazoa</taxon>
        <taxon>Chordata</taxon>
        <taxon>Craniata</taxon>
        <taxon>Vertebrata</taxon>
        <taxon>Euteleostomi</taxon>
        <taxon>Mammalia</taxon>
        <taxon>Eutheria</taxon>
        <taxon>Laurasiatheria</taxon>
        <taxon>Artiodactyla</taxon>
        <taxon>Ruminantia</taxon>
        <taxon>Pecora</taxon>
        <taxon>Bovidae</taxon>
        <taxon>Bovinae</taxon>
        <taxon>Bos</taxon>
    </lineage>
</organism>
<sequence>MMAFEQIPKKDWYSILGADPSASVSDLKQKYQKLILMYHPDKQSADAPAGSVEECIQKFIEIDQAWKILGNEETKKEYDLQRHEDDLRNMGPVDARIYLEEMSWNEDDHSFSLSCRCGGKYSVSKDEAEEVTLISCDTCSLIIELLHYC</sequence>
<evidence type="ECO:0000250" key="1"/>
<evidence type="ECO:0000255" key="2">
    <source>
        <dbReference type="PROSITE-ProRule" id="PRU00286"/>
    </source>
</evidence>
<evidence type="ECO:0000255" key="3">
    <source>
        <dbReference type="PROSITE-ProRule" id="PRU00456"/>
    </source>
</evidence>
<evidence type="ECO:0000305" key="4"/>
<accession>Q0VBY7</accession>